<comment type="catalytic activity">
    <reaction evidence="1">
        <text>(S)-4-hydroxy-2-oxopentanoate = acetaldehyde + pyruvate</text>
        <dbReference type="Rhea" id="RHEA:22624"/>
        <dbReference type="ChEBI" id="CHEBI:15343"/>
        <dbReference type="ChEBI" id="CHEBI:15361"/>
        <dbReference type="ChEBI" id="CHEBI:73143"/>
        <dbReference type="EC" id="4.1.3.39"/>
    </reaction>
</comment>
<comment type="similarity">
    <text evidence="1">Belongs to the 4-hydroxy-2-oxovalerate aldolase family.</text>
</comment>
<accession>A7IDU6</accession>
<feature type="chain" id="PRO_0000387930" description="4-hydroxy-2-oxovalerate aldolase">
    <location>
        <begin position="1"/>
        <end position="344"/>
    </location>
</feature>
<feature type="domain" description="Pyruvate carboxyltransferase" evidence="1">
    <location>
        <begin position="9"/>
        <end position="261"/>
    </location>
</feature>
<feature type="active site" description="Proton acceptor" evidence="1">
    <location>
        <position position="21"/>
    </location>
</feature>
<feature type="binding site" evidence="1">
    <location>
        <begin position="17"/>
        <end position="18"/>
    </location>
    <ligand>
        <name>substrate</name>
    </ligand>
</feature>
<feature type="binding site" evidence="1">
    <location>
        <position position="18"/>
    </location>
    <ligand>
        <name>Mn(2+)</name>
        <dbReference type="ChEBI" id="CHEBI:29035"/>
    </ligand>
</feature>
<feature type="binding site" evidence="1">
    <location>
        <position position="171"/>
    </location>
    <ligand>
        <name>substrate</name>
    </ligand>
</feature>
<feature type="binding site" evidence="1">
    <location>
        <position position="200"/>
    </location>
    <ligand>
        <name>Mn(2+)</name>
        <dbReference type="ChEBI" id="CHEBI:29035"/>
    </ligand>
</feature>
<feature type="binding site" evidence="1">
    <location>
        <position position="200"/>
    </location>
    <ligand>
        <name>substrate</name>
    </ligand>
</feature>
<feature type="binding site" evidence="1">
    <location>
        <position position="202"/>
    </location>
    <ligand>
        <name>Mn(2+)</name>
        <dbReference type="ChEBI" id="CHEBI:29035"/>
    </ligand>
</feature>
<feature type="binding site" evidence="1">
    <location>
        <position position="291"/>
    </location>
    <ligand>
        <name>substrate</name>
    </ligand>
</feature>
<feature type="site" description="Transition state stabilizer" evidence="1">
    <location>
        <position position="17"/>
    </location>
</feature>
<evidence type="ECO:0000255" key="1">
    <source>
        <dbReference type="HAMAP-Rule" id="MF_01656"/>
    </source>
</evidence>
<sequence length="344" mass="36909">MARPNKDKLYIQDVTLRDGMHALRHQYDLAATRAIARALDRARVDAIEISHGDGLTGSTFNYGFGAHDDAEWIAAVAEECSHAVVTVLLIPGIGTVHDLKHAYEAGARSVRVCTHCTEADVSRQHIEAARELGMDTATFLMMAHMIPPEALAEQARLMESYGAECVYVTDSAGALLPEDYTARVKTLRDALRPETEIGVHTHHNLTLGIANAVAGIEAGAVRVDASLAGMGAGAGNAPLEALIAVLNRKGIDTGCDLYALMDAADDLVRPLQDRPVRVDRESLSLGYAGVYSSFLRHAENAAQTYGVDTREILSELGRRRMVGGQEDMIVDVALDLAEAKAAVA</sequence>
<protein>
    <recommendedName>
        <fullName evidence="1">4-hydroxy-2-oxovalerate aldolase</fullName>
        <shortName evidence="1">HOA</shortName>
        <ecNumber evidence="1">4.1.3.39</ecNumber>
    </recommendedName>
    <alternativeName>
        <fullName evidence="1">4-hydroxy-2-keto-pentanoic acid aldolase</fullName>
    </alternativeName>
    <alternativeName>
        <fullName evidence="1">4-hydroxy-2-oxopentanoate aldolase</fullName>
    </alternativeName>
</protein>
<proteinExistence type="inferred from homology"/>
<dbReference type="EC" id="4.1.3.39" evidence="1"/>
<dbReference type="EMBL" id="CP000781">
    <property type="protein sequence ID" value="ABS66189.1"/>
    <property type="molecule type" value="Genomic_DNA"/>
</dbReference>
<dbReference type="SMR" id="A7IDU6"/>
<dbReference type="STRING" id="78245.Xaut_0938"/>
<dbReference type="KEGG" id="xau:Xaut_0938"/>
<dbReference type="eggNOG" id="COG0119">
    <property type="taxonomic scope" value="Bacteria"/>
</dbReference>
<dbReference type="HOGENOM" id="CLU_049173_0_0_5"/>
<dbReference type="OrthoDB" id="9803573at2"/>
<dbReference type="PhylomeDB" id="A7IDU6"/>
<dbReference type="Proteomes" id="UP000002417">
    <property type="component" value="Chromosome"/>
</dbReference>
<dbReference type="GO" id="GO:0003852">
    <property type="term" value="F:2-isopropylmalate synthase activity"/>
    <property type="evidence" value="ECO:0007669"/>
    <property type="project" value="TreeGrafter"/>
</dbReference>
<dbReference type="GO" id="GO:0008701">
    <property type="term" value="F:4-hydroxy-2-oxovalerate aldolase activity"/>
    <property type="evidence" value="ECO:0007669"/>
    <property type="project" value="UniProtKB-UniRule"/>
</dbReference>
<dbReference type="GO" id="GO:0030145">
    <property type="term" value="F:manganese ion binding"/>
    <property type="evidence" value="ECO:0007669"/>
    <property type="project" value="UniProtKB-UniRule"/>
</dbReference>
<dbReference type="GO" id="GO:0009056">
    <property type="term" value="P:catabolic process"/>
    <property type="evidence" value="ECO:0007669"/>
    <property type="project" value="UniProtKB-KW"/>
</dbReference>
<dbReference type="GO" id="GO:0009098">
    <property type="term" value="P:L-leucine biosynthetic process"/>
    <property type="evidence" value="ECO:0007669"/>
    <property type="project" value="TreeGrafter"/>
</dbReference>
<dbReference type="CDD" id="cd07943">
    <property type="entry name" value="DRE_TIM_HOA"/>
    <property type="match status" value="1"/>
</dbReference>
<dbReference type="Gene3D" id="1.10.8.60">
    <property type="match status" value="1"/>
</dbReference>
<dbReference type="Gene3D" id="3.20.20.70">
    <property type="entry name" value="Aldolase class I"/>
    <property type="match status" value="1"/>
</dbReference>
<dbReference type="HAMAP" id="MF_01656">
    <property type="entry name" value="HOA"/>
    <property type="match status" value="1"/>
</dbReference>
<dbReference type="InterPro" id="IPR050073">
    <property type="entry name" value="2-IPM_HCS-like"/>
</dbReference>
<dbReference type="InterPro" id="IPR017629">
    <property type="entry name" value="4OH_2_O-val_aldolase"/>
</dbReference>
<dbReference type="InterPro" id="IPR013785">
    <property type="entry name" value="Aldolase_TIM"/>
</dbReference>
<dbReference type="InterPro" id="IPR012425">
    <property type="entry name" value="DmpG_comm"/>
</dbReference>
<dbReference type="InterPro" id="IPR035685">
    <property type="entry name" value="DRE_TIM_HOA"/>
</dbReference>
<dbReference type="InterPro" id="IPR000891">
    <property type="entry name" value="PYR_CT"/>
</dbReference>
<dbReference type="NCBIfam" id="TIGR03217">
    <property type="entry name" value="4OH_2_O_val_ald"/>
    <property type="match status" value="1"/>
</dbReference>
<dbReference type="NCBIfam" id="NF006049">
    <property type="entry name" value="PRK08195.1"/>
    <property type="match status" value="1"/>
</dbReference>
<dbReference type="PANTHER" id="PTHR10277:SF9">
    <property type="entry name" value="2-ISOPROPYLMALATE SYNTHASE 1, CHLOROPLASTIC-RELATED"/>
    <property type="match status" value="1"/>
</dbReference>
<dbReference type="PANTHER" id="PTHR10277">
    <property type="entry name" value="HOMOCITRATE SYNTHASE-RELATED"/>
    <property type="match status" value="1"/>
</dbReference>
<dbReference type="Pfam" id="PF07836">
    <property type="entry name" value="DmpG_comm"/>
    <property type="match status" value="1"/>
</dbReference>
<dbReference type="Pfam" id="PF00682">
    <property type="entry name" value="HMGL-like"/>
    <property type="match status" value="1"/>
</dbReference>
<dbReference type="SUPFAM" id="SSF51569">
    <property type="entry name" value="Aldolase"/>
    <property type="match status" value="1"/>
</dbReference>
<dbReference type="SUPFAM" id="SSF89000">
    <property type="entry name" value="post-HMGL domain-like"/>
    <property type="match status" value="1"/>
</dbReference>
<dbReference type="PROSITE" id="PS50991">
    <property type="entry name" value="PYR_CT"/>
    <property type="match status" value="1"/>
</dbReference>
<name>HOA_XANP2</name>
<reference key="1">
    <citation type="submission" date="2007-07" db="EMBL/GenBank/DDBJ databases">
        <title>Complete sequence of chromosome of Xanthobacter autotrophicus Py2.</title>
        <authorList>
            <consortium name="US DOE Joint Genome Institute"/>
            <person name="Copeland A."/>
            <person name="Lucas S."/>
            <person name="Lapidus A."/>
            <person name="Barry K."/>
            <person name="Glavina del Rio T."/>
            <person name="Hammon N."/>
            <person name="Israni S."/>
            <person name="Dalin E."/>
            <person name="Tice H."/>
            <person name="Pitluck S."/>
            <person name="Sims D."/>
            <person name="Brettin T."/>
            <person name="Bruce D."/>
            <person name="Detter J.C."/>
            <person name="Han C."/>
            <person name="Tapia R."/>
            <person name="Brainard J."/>
            <person name="Schmutz J."/>
            <person name="Larimer F."/>
            <person name="Land M."/>
            <person name="Hauser L."/>
            <person name="Kyrpides N."/>
            <person name="Kim E."/>
            <person name="Ensigns S.A."/>
            <person name="Richardson P."/>
        </authorList>
    </citation>
    <scope>NUCLEOTIDE SEQUENCE [LARGE SCALE GENOMIC DNA]</scope>
    <source>
        <strain>ATCC BAA-1158 / Py2</strain>
    </source>
</reference>
<gene>
    <name type="ordered locus">Xaut_0938</name>
</gene>
<keyword id="KW-0058">Aromatic hydrocarbons catabolism</keyword>
<keyword id="KW-0456">Lyase</keyword>
<keyword id="KW-0464">Manganese</keyword>
<keyword id="KW-0479">Metal-binding</keyword>
<keyword id="KW-1185">Reference proteome</keyword>
<organism>
    <name type="scientific">Xanthobacter autotrophicus (strain ATCC BAA-1158 / Py2)</name>
    <dbReference type="NCBI Taxonomy" id="78245"/>
    <lineage>
        <taxon>Bacteria</taxon>
        <taxon>Pseudomonadati</taxon>
        <taxon>Pseudomonadota</taxon>
        <taxon>Alphaproteobacteria</taxon>
        <taxon>Hyphomicrobiales</taxon>
        <taxon>Xanthobacteraceae</taxon>
        <taxon>Xanthobacter</taxon>
    </lineage>
</organism>